<proteinExistence type="evidence at protein level"/>
<name>PESC_MOUSE</name>
<dbReference type="EMBL" id="AF289539">
    <property type="protein sequence ID" value="AAG40734.1"/>
    <property type="molecule type" value="mRNA"/>
</dbReference>
<dbReference type="EMBL" id="AK029075">
    <property type="protein sequence ID" value="BAC26278.1"/>
    <property type="molecule type" value="mRNA"/>
</dbReference>
<dbReference type="EMBL" id="AK088831">
    <property type="protein sequence ID" value="BAC40599.1"/>
    <property type="molecule type" value="mRNA"/>
</dbReference>
<dbReference type="EMBL" id="BC004844">
    <property type="protein sequence ID" value="AAH04844.1"/>
    <property type="molecule type" value="mRNA"/>
</dbReference>
<dbReference type="EMBL" id="BC011142">
    <property type="protein sequence ID" value="AAH11142.1"/>
    <property type="molecule type" value="mRNA"/>
</dbReference>
<dbReference type="CCDS" id="CCDS24372.1"/>
<dbReference type="RefSeq" id="NP_075027.1">
    <property type="nucleotide sequence ID" value="NM_022889.3"/>
</dbReference>
<dbReference type="SMR" id="Q9EQ61"/>
<dbReference type="BioGRID" id="211118">
    <property type="interactions" value="6"/>
</dbReference>
<dbReference type="CORUM" id="Q9EQ61"/>
<dbReference type="FunCoup" id="Q9EQ61">
    <property type="interactions" value="4126"/>
</dbReference>
<dbReference type="STRING" id="10090.ENSMUSP00000020705"/>
<dbReference type="GlyGen" id="Q9EQ61">
    <property type="glycosylation" value="1 site, 1 O-linked glycan (1 site)"/>
</dbReference>
<dbReference type="iPTMnet" id="Q9EQ61"/>
<dbReference type="PhosphoSitePlus" id="Q9EQ61"/>
<dbReference type="SwissPalm" id="Q9EQ61"/>
<dbReference type="PaxDb" id="10090-ENSMUSP00000105612"/>
<dbReference type="ProteomicsDB" id="288036"/>
<dbReference type="Pumba" id="Q9EQ61"/>
<dbReference type="Antibodypedia" id="10811">
    <property type="antibodies" value="262 antibodies from 32 providers"/>
</dbReference>
<dbReference type="DNASU" id="64934"/>
<dbReference type="Ensembl" id="ENSMUST00000020705.5">
    <property type="protein sequence ID" value="ENSMUSP00000020705.5"/>
    <property type="gene ID" value="ENSMUSG00000020430.13"/>
</dbReference>
<dbReference type="GeneID" id="64934"/>
<dbReference type="KEGG" id="mmu:64934"/>
<dbReference type="UCSC" id="uc007hua.1">
    <property type="organism name" value="mouse"/>
</dbReference>
<dbReference type="AGR" id="MGI:1890613"/>
<dbReference type="CTD" id="23481"/>
<dbReference type="MGI" id="MGI:1890613">
    <property type="gene designation" value="Pes1"/>
</dbReference>
<dbReference type="VEuPathDB" id="HostDB:ENSMUSG00000020430"/>
<dbReference type="eggNOG" id="KOG2481">
    <property type="taxonomic scope" value="Eukaryota"/>
</dbReference>
<dbReference type="GeneTree" id="ENSGT00390000002626"/>
<dbReference type="HOGENOM" id="CLU_019619_0_0_1"/>
<dbReference type="InParanoid" id="Q9EQ61"/>
<dbReference type="OrthoDB" id="55018at9989"/>
<dbReference type="Reactome" id="R-MMU-6791226">
    <property type="pathway name" value="Major pathway of rRNA processing in the nucleolus and cytosol"/>
</dbReference>
<dbReference type="BioGRID-ORCS" id="64934">
    <property type="hits" value="29 hits in 73 CRISPR screens"/>
</dbReference>
<dbReference type="ChiTaRS" id="Pes1">
    <property type="organism name" value="mouse"/>
</dbReference>
<dbReference type="PRO" id="PR:Q9EQ61"/>
<dbReference type="Proteomes" id="UP000000589">
    <property type="component" value="Chromosome 11"/>
</dbReference>
<dbReference type="RNAct" id="Q9EQ61">
    <property type="molecule type" value="protein"/>
</dbReference>
<dbReference type="Bgee" id="ENSMUSG00000020430">
    <property type="expression patterns" value="Expressed in dorsal pancreas and 233 other cell types or tissues"/>
</dbReference>
<dbReference type="ExpressionAtlas" id="Q9EQ61">
    <property type="expression patterns" value="baseline and differential"/>
</dbReference>
<dbReference type="GO" id="GO:0000793">
    <property type="term" value="C:condensed chromosome"/>
    <property type="evidence" value="ECO:0000314"/>
    <property type="project" value="MGI"/>
</dbReference>
<dbReference type="GO" id="GO:0005730">
    <property type="term" value="C:nucleolus"/>
    <property type="evidence" value="ECO:0000314"/>
    <property type="project" value="MGI"/>
</dbReference>
<dbReference type="GO" id="GO:0005654">
    <property type="term" value="C:nucleoplasm"/>
    <property type="evidence" value="ECO:0000250"/>
    <property type="project" value="UniProtKB"/>
</dbReference>
<dbReference type="GO" id="GO:0005634">
    <property type="term" value="C:nucleus"/>
    <property type="evidence" value="ECO:0000314"/>
    <property type="project" value="MGI"/>
</dbReference>
<dbReference type="GO" id="GO:0070545">
    <property type="term" value="C:PeBoW complex"/>
    <property type="evidence" value="ECO:0000314"/>
    <property type="project" value="MGI"/>
</dbReference>
<dbReference type="GO" id="GO:0030687">
    <property type="term" value="C:preribosome, large subunit precursor"/>
    <property type="evidence" value="ECO:0000250"/>
    <property type="project" value="UniProtKB"/>
</dbReference>
<dbReference type="GO" id="GO:0043021">
    <property type="term" value="F:ribonucleoprotein complex binding"/>
    <property type="evidence" value="ECO:0007669"/>
    <property type="project" value="UniProtKB-UniRule"/>
</dbReference>
<dbReference type="GO" id="GO:0048144">
    <property type="term" value="P:fibroblast proliferation"/>
    <property type="evidence" value="ECO:0000266"/>
    <property type="project" value="MGI"/>
</dbReference>
<dbReference type="GO" id="GO:0000466">
    <property type="term" value="P:maturation of 5.8S rRNA from tricistronic rRNA transcript (SSU-rRNA, 5.8S rRNA, LSU-rRNA)"/>
    <property type="evidence" value="ECO:0000250"/>
    <property type="project" value="UniProtKB"/>
</dbReference>
<dbReference type="GO" id="GO:0000463">
    <property type="term" value="P:maturation of LSU-rRNA from tricistronic rRNA transcript (SSU-rRNA, 5.8S rRNA, LSU-rRNA)"/>
    <property type="evidence" value="ECO:0000315"/>
    <property type="project" value="MGI"/>
</dbReference>
<dbReference type="GO" id="GO:0007000">
    <property type="term" value="P:nucleolus organization"/>
    <property type="evidence" value="ECO:0000315"/>
    <property type="project" value="MGI"/>
</dbReference>
<dbReference type="GO" id="GO:0033365">
    <property type="term" value="P:protein localization to organelle"/>
    <property type="evidence" value="ECO:0000315"/>
    <property type="project" value="MGI"/>
</dbReference>
<dbReference type="GO" id="GO:0051726">
    <property type="term" value="P:regulation of cell cycle"/>
    <property type="evidence" value="ECO:0000250"/>
    <property type="project" value="UniProtKB"/>
</dbReference>
<dbReference type="GO" id="GO:0042254">
    <property type="term" value="P:ribosome biogenesis"/>
    <property type="evidence" value="ECO:0000315"/>
    <property type="project" value="MGI"/>
</dbReference>
<dbReference type="GO" id="GO:0006364">
    <property type="term" value="P:rRNA processing"/>
    <property type="evidence" value="ECO:0000315"/>
    <property type="project" value="MGI"/>
</dbReference>
<dbReference type="CDD" id="cd17709">
    <property type="entry name" value="BRCT_pescadillo_like"/>
    <property type="match status" value="1"/>
</dbReference>
<dbReference type="FunFam" id="3.40.50.10190:FF:000002">
    <property type="entry name" value="Pescadillo homolog"/>
    <property type="match status" value="1"/>
</dbReference>
<dbReference type="Gene3D" id="3.40.50.10190">
    <property type="entry name" value="BRCT domain"/>
    <property type="match status" value="1"/>
</dbReference>
<dbReference type="HAMAP" id="MF_03028">
    <property type="entry name" value="Pescadillo"/>
    <property type="match status" value="1"/>
</dbReference>
<dbReference type="InterPro" id="IPR001357">
    <property type="entry name" value="BRCT_dom"/>
</dbReference>
<dbReference type="InterPro" id="IPR036420">
    <property type="entry name" value="BRCT_dom_sf"/>
</dbReference>
<dbReference type="InterPro" id="IPR010613">
    <property type="entry name" value="PES"/>
</dbReference>
<dbReference type="PANTHER" id="PTHR12221">
    <property type="entry name" value="PESCADILLO - RELATED"/>
    <property type="match status" value="1"/>
</dbReference>
<dbReference type="PANTHER" id="PTHR12221:SF6">
    <property type="entry name" value="PESCADILLO HOMOLOG"/>
    <property type="match status" value="1"/>
</dbReference>
<dbReference type="Pfam" id="PF16589">
    <property type="entry name" value="BRCT_2"/>
    <property type="match status" value="1"/>
</dbReference>
<dbReference type="Pfam" id="PF06732">
    <property type="entry name" value="Pescadillo_N"/>
    <property type="match status" value="1"/>
</dbReference>
<dbReference type="SMART" id="SM00292">
    <property type="entry name" value="BRCT"/>
    <property type="match status" value="1"/>
</dbReference>
<dbReference type="SUPFAM" id="SSF52113">
    <property type="entry name" value="BRCT domain"/>
    <property type="match status" value="1"/>
</dbReference>
<dbReference type="PROSITE" id="PS50172">
    <property type="entry name" value="BRCT"/>
    <property type="match status" value="1"/>
</dbReference>
<feature type="chain" id="PRO_0000186189" description="Pescadillo homolog">
    <location>
        <begin position="1"/>
        <end position="584"/>
    </location>
</feature>
<feature type="domain" description="BRCT" evidence="3">
    <location>
        <begin position="321"/>
        <end position="414"/>
    </location>
</feature>
<feature type="region of interest" description="Sufficient for nucleolar localization" evidence="1">
    <location>
        <begin position="1"/>
        <end position="257"/>
    </location>
</feature>
<feature type="region of interest" description="Required for 28S ribosomal RNA processing" evidence="1">
    <location>
        <begin position="1"/>
        <end position="54"/>
    </location>
</feature>
<feature type="region of interest" description="Sufficient for interaction with MAP1B" evidence="10">
    <location>
        <begin position="312"/>
        <end position="414"/>
    </location>
</feature>
<feature type="region of interest" description="Disordered" evidence="4">
    <location>
        <begin position="449"/>
        <end position="510"/>
    </location>
</feature>
<feature type="region of interest" description="Required for 28S ribosomal RNA processing" evidence="1">
    <location>
        <begin position="535"/>
        <end position="584"/>
    </location>
</feature>
<feature type="region of interest" description="Disordered" evidence="4">
    <location>
        <begin position="560"/>
        <end position="584"/>
    </location>
</feature>
<feature type="compositionally biased region" description="Acidic residues" evidence="4">
    <location>
        <begin position="454"/>
        <end position="489"/>
    </location>
</feature>
<feature type="compositionally biased region" description="Basic and acidic residues" evidence="4">
    <location>
        <begin position="496"/>
        <end position="505"/>
    </location>
</feature>
<feature type="compositionally biased region" description="Basic and acidic residues" evidence="4">
    <location>
        <begin position="560"/>
        <end position="575"/>
    </location>
</feature>
<feature type="modified residue" description="N6-acetyllysine" evidence="2">
    <location>
        <position position="98"/>
    </location>
</feature>
<feature type="cross-link" description="Glycyl lysine isopeptide (Lys-Gly) (interchain with G-Cter in SUMO1); alternate" evidence="2">
    <location>
        <position position="513"/>
    </location>
</feature>
<feature type="cross-link" description="Glycyl lysine isopeptide (Lys-Gly) (interchain with G-Cter in SUMO2); alternate" evidence="2">
    <location>
        <position position="513"/>
    </location>
</feature>
<keyword id="KW-0007">Acetylation</keyword>
<keyword id="KW-0158">Chromosome</keyword>
<keyword id="KW-1017">Isopeptide bond</keyword>
<keyword id="KW-0539">Nucleus</keyword>
<keyword id="KW-1185">Reference proteome</keyword>
<keyword id="KW-0690">Ribosome biogenesis</keyword>
<keyword id="KW-0698">rRNA processing</keyword>
<keyword id="KW-0832">Ubl conjugation</keyword>
<evidence type="ECO:0000250" key="1"/>
<evidence type="ECO:0000250" key="2">
    <source>
        <dbReference type="UniProtKB" id="O00541"/>
    </source>
</evidence>
<evidence type="ECO:0000255" key="3">
    <source>
        <dbReference type="HAMAP-Rule" id="MF_03028"/>
    </source>
</evidence>
<evidence type="ECO:0000256" key="4">
    <source>
        <dbReference type="SAM" id="MobiDB-lite"/>
    </source>
</evidence>
<evidence type="ECO:0000269" key="5">
    <source>
    </source>
</evidence>
<evidence type="ECO:0000269" key="6">
    <source>
    </source>
</evidence>
<evidence type="ECO:0000269" key="7">
    <source>
    </source>
</evidence>
<evidence type="ECO:0000269" key="8">
    <source>
    </source>
</evidence>
<evidence type="ECO:0000269" key="9">
    <source>
    </source>
</evidence>
<evidence type="ECO:0000269" key="10">
    <source>
    </source>
</evidence>
<sequence>MGGLEKKKYERGSATNYITRNKARKKLQLSLPDFRRLCILKGIYPHEPKHKKKVNKGSTAARTFYLIKDIKFLLHEPIVNKFREYKVFVRKLRKAYGKSEWNAVERLKDNKPCYKLDHIVKERYPTFIDALRDLDDALSMCFLFSTFPRTGKCHVQTIQLCRRLTVEFLHYVITARALRKVFLSIKGIYYQAEVLGQPIVWIAPYAFSHDHPTDVDYRVMATFTEFYTTLLGFVNFRLYQSLNLHYPPKLEGQAQAETKISEDTYALDSESSMEKLAALSASLARVVVPAIEEAEADEFPTDGEVTAQEEDRKKELEAQEKHKKLFEGLKFFLNREVPREALAFIIRSFGGDVSWDKSLCIGATYDVTDSCITHQIVDRPGQQTPIIGRYYVQPQWVFDCVNARLLLPVAEYFPGMQLPPHLSPFVSEKEGDYIPPEKLKLLALQRGEDPGHLEEEEEEDEDDDNEGDVAAENEEEDVEVESEEEEEEEVHLSALEQHRLEEKKPQVMAGTVKLEDKQRLAQEEESEAKRLAIMMMKKREKYLYQKIMFGKRRKIREANKLAEKRKAHDDAVRSEKKAKRTRPV</sequence>
<comment type="function">
    <text evidence="3 9 10">Component of the PeBoW complex, which is required for maturation of 28S and 5.8S ribosomal RNAs and formation of the 60S ribosome.</text>
</comment>
<comment type="subunit">
    <text evidence="3 8 9 10">Component of the PeBoW complex, composed of BOP1, PES1 and WDR12 (PubMed:15225545). The complex is held together by BOP1, which interacts with PES1 via its N-terminal domain and with WDR12 via a high-affinity interaction between the seven-bladed beta-propeller domains of the 2 proteins. The PeBoW complex associates with the 66S pre-ribosome (By similarity). The PeBoW complex also associates with DDX27, PES1 interacts directly with DDX27 (By similarity). Interacts with IRS1 and UBTF (PubMed:15169904). May interact with MAP1B (PubMed:17308336).</text>
</comment>
<comment type="subcellular location">
    <subcellularLocation>
        <location>Nucleus</location>
        <location>Nucleolus</location>
    </subcellularLocation>
    <subcellularLocation>
        <location>Nucleus</location>
        <location>Nucleoplasm</location>
    </subcellularLocation>
    <subcellularLocation>
        <location>Chromosome</location>
    </subcellularLocation>
    <text>Appears to localize to the periphery of metaphase chromosomes during mitosis and to the prenucleolar bodies that form in mitotic cells prior to the actual nucleoli.</text>
</comment>
<comment type="tissue specificity">
    <text evidence="6 7">Ubiquitous. Highest levels appear to be found in tissues that contain a population of proliferating cells, such as ovary and testis. Also appears to be highly expressed in kidney and liver. In the brain expression is restricted to neural progenitor cells and postmitotic neurons. Highly expressed in malignant astrocytes.</text>
</comment>
<comment type="developmental stage">
    <text evidence="5 7">In 2-cell and 4-cell stage interphase blastomeres expression is restricted to a sub-nuclear band that encircles one or more large vacuoles within the nucleus. These vacuoles may give rise to the mature nucleolus. Later in embryogenesis high levels are detected in developing liver. Is also widely and highly expressed throughout the developing brain and spinal cord at embryonic day 13.</text>
</comment>
<comment type="induction">
    <text evidence="5 7">Induced in malignant astrocytes following the loss of p53. Induced in hepatocytes following partial hepatectomy.</text>
</comment>
<comment type="PTM">
    <text evidence="3">Sumoylated.</text>
</comment>
<comment type="disruption phenotype">
    <text evidence="7">Embryos die during preimplantation stages of development, with blastomeres failing to progress past morula stages. Within blastocysts the nucleoli fail to form correctly and the number of ribosomes appears dramatically reduced.</text>
</comment>
<comment type="similarity">
    <text evidence="3">Belongs to the pescadillo family.</text>
</comment>
<protein>
    <recommendedName>
        <fullName evidence="3">Pescadillo homolog</fullName>
    </recommendedName>
</protein>
<gene>
    <name type="primary">Pes1</name>
    <name type="synonym">Pes</name>
</gene>
<reference key="1">
    <citation type="journal article" date="2000" name="Genomics">
        <title>The murine Pes1 gene encodes a nuclear protein containing a BRCT domain.</title>
        <authorList>
            <person name="Haque J."/>
            <person name="Boger S."/>
            <person name="Li J."/>
            <person name="Duncan S.A."/>
        </authorList>
    </citation>
    <scope>NUCLEOTIDE SEQUENCE [MRNA]</scope>
    <scope>SUBCELLULAR LOCATION</scope>
    <scope>TISSUE SPECIFICITY</scope>
    <source>
        <strain>C57BL/6J</strain>
    </source>
</reference>
<reference key="2">
    <citation type="journal article" date="2005" name="Science">
        <title>The transcriptional landscape of the mammalian genome.</title>
        <authorList>
            <person name="Carninci P."/>
            <person name="Kasukawa T."/>
            <person name="Katayama S."/>
            <person name="Gough J."/>
            <person name="Frith M.C."/>
            <person name="Maeda N."/>
            <person name="Oyama R."/>
            <person name="Ravasi T."/>
            <person name="Lenhard B."/>
            <person name="Wells C."/>
            <person name="Kodzius R."/>
            <person name="Shimokawa K."/>
            <person name="Bajic V.B."/>
            <person name="Brenner S.E."/>
            <person name="Batalov S."/>
            <person name="Forrest A.R."/>
            <person name="Zavolan M."/>
            <person name="Davis M.J."/>
            <person name="Wilming L.G."/>
            <person name="Aidinis V."/>
            <person name="Allen J.E."/>
            <person name="Ambesi-Impiombato A."/>
            <person name="Apweiler R."/>
            <person name="Aturaliya R.N."/>
            <person name="Bailey T.L."/>
            <person name="Bansal M."/>
            <person name="Baxter L."/>
            <person name="Beisel K.W."/>
            <person name="Bersano T."/>
            <person name="Bono H."/>
            <person name="Chalk A.M."/>
            <person name="Chiu K.P."/>
            <person name="Choudhary V."/>
            <person name="Christoffels A."/>
            <person name="Clutterbuck D.R."/>
            <person name="Crowe M.L."/>
            <person name="Dalla E."/>
            <person name="Dalrymple B.P."/>
            <person name="de Bono B."/>
            <person name="Della Gatta G."/>
            <person name="di Bernardo D."/>
            <person name="Down T."/>
            <person name="Engstrom P."/>
            <person name="Fagiolini M."/>
            <person name="Faulkner G."/>
            <person name="Fletcher C.F."/>
            <person name="Fukushima T."/>
            <person name="Furuno M."/>
            <person name="Futaki S."/>
            <person name="Gariboldi M."/>
            <person name="Georgii-Hemming P."/>
            <person name="Gingeras T.R."/>
            <person name="Gojobori T."/>
            <person name="Green R.E."/>
            <person name="Gustincich S."/>
            <person name="Harbers M."/>
            <person name="Hayashi Y."/>
            <person name="Hensch T.K."/>
            <person name="Hirokawa N."/>
            <person name="Hill D."/>
            <person name="Huminiecki L."/>
            <person name="Iacono M."/>
            <person name="Ikeo K."/>
            <person name="Iwama A."/>
            <person name="Ishikawa T."/>
            <person name="Jakt M."/>
            <person name="Kanapin A."/>
            <person name="Katoh M."/>
            <person name="Kawasawa Y."/>
            <person name="Kelso J."/>
            <person name="Kitamura H."/>
            <person name="Kitano H."/>
            <person name="Kollias G."/>
            <person name="Krishnan S.P."/>
            <person name="Kruger A."/>
            <person name="Kummerfeld S.K."/>
            <person name="Kurochkin I.V."/>
            <person name="Lareau L.F."/>
            <person name="Lazarevic D."/>
            <person name="Lipovich L."/>
            <person name="Liu J."/>
            <person name="Liuni S."/>
            <person name="McWilliam S."/>
            <person name="Madan Babu M."/>
            <person name="Madera M."/>
            <person name="Marchionni L."/>
            <person name="Matsuda H."/>
            <person name="Matsuzawa S."/>
            <person name="Miki H."/>
            <person name="Mignone F."/>
            <person name="Miyake S."/>
            <person name="Morris K."/>
            <person name="Mottagui-Tabar S."/>
            <person name="Mulder N."/>
            <person name="Nakano N."/>
            <person name="Nakauchi H."/>
            <person name="Ng P."/>
            <person name="Nilsson R."/>
            <person name="Nishiguchi S."/>
            <person name="Nishikawa S."/>
            <person name="Nori F."/>
            <person name="Ohara O."/>
            <person name="Okazaki Y."/>
            <person name="Orlando V."/>
            <person name="Pang K.C."/>
            <person name="Pavan W.J."/>
            <person name="Pavesi G."/>
            <person name="Pesole G."/>
            <person name="Petrovsky N."/>
            <person name="Piazza S."/>
            <person name="Reed J."/>
            <person name="Reid J.F."/>
            <person name="Ring B.Z."/>
            <person name="Ringwald M."/>
            <person name="Rost B."/>
            <person name="Ruan Y."/>
            <person name="Salzberg S.L."/>
            <person name="Sandelin A."/>
            <person name="Schneider C."/>
            <person name="Schoenbach C."/>
            <person name="Sekiguchi K."/>
            <person name="Semple C.A."/>
            <person name="Seno S."/>
            <person name="Sessa L."/>
            <person name="Sheng Y."/>
            <person name="Shibata Y."/>
            <person name="Shimada H."/>
            <person name="Shimada K."/>
            <person name="Silva D."/>
            <person name="Sinclair B."/>
            <person name="Sperling S."/>
            <person name="Stupka E."/>
            <person name="Sugiura K."/>
            <person name="Sultana R."/>
            <person name="Takenaka Y."/>
            <person name="Taki K."/>
            <person name="Tammoja K."/>
            <person name="Tan S.L."/>
            <person name="Tang S."/>
            <person name="Taylor M.S."/>
            <person name="Tegner J."/>
            <person name="Teichmann S.A."/>
            <person name="Ueda H.R."/>
            <person name="van Nimwegen E."/>
            <person name="Verardo R."/>
            <person name="Wei C.L."/>
            <person name="Yagi K."/>
            <person name="Yamanishi H."/>
            <person name="Zabarovsky E."/>
            <person name="Zhu S."/>
            <person name="Zimmer A."/>
            <person name="Hide W."/>
            <person name="Bult C."/>
            <person name="Grimmond S.M."/>
            <person name="Teasdale R.D."/>
            <person name="Liu E.T."/>
            <person name="Brusic V."/>
            <person name="Quackenbush J."/>
            <person name="Wahlestedt C."/>
            <person name="Mattick J.S."/>
            <person name="Hume D.A."/>
            <person name="Kai C."/>
            <person name="Sasaki D."/>
            <person name="Tomaru Y."/>
            <person name="Fukuda S."/>
            <person name="Kanamori-Katayama M."/>
            <person name="Suzuki M."/>
            <person name="Aoki J."/>
            <person name="Arakawa T."/>
            <person name="Iida J."/>
            <person name="Imamura K."/>
            <person name="Itoh M."/>
            <person name="Kato T."/>
            <person name="Kawaji H."/>
            <person name="Kawagashira N."/>
            <person name="Kawashima T."/>
            <person name="Kojima M."/>
            <person name="Kondo S."/>
            <person name="Konno H."/>
            <person name="Nakano K."/>
            <person name="Ninomiya N."/>
            <person name="Nishio T."/>
            <person name="Okada M."/>
            <person name="Plessy C."/>
            <person name="Shibata K."/>
            <person name="Shiraki T."/>
            <person name="Suzuki S."/>
            <person name="Tagami M."/>
            <person name="Waki K."/>
            <person name="Watahiki A."/>
            <person name="Okamura-Oho Y."/>
            <person name="Suzuki H."/>
            <person name="Kawai J."/>
            <person name="Hayashizaki Y."/>
        </authorList>
    </citation>
    <scope>NUCLEOTIDE SEQUENCE [LARGE SCALE MRNA]</scope>
    <source>
        <strain>C57BL/6J</strain>
        <strain>NOD</strain>
        <tissue>Skin</tissue>
        <tissue>Thymus</tissue>
    </source>
</reference>
<reference key="3">
    <citation type="journal article" date="2004" name="Genome Res.">
        <title>The status, quality, and expansion of the NIH full-length cDNA project: the Mammalian Gene Collection (MGC).</title>
        <authorList>
            <consortium name="The MGC Project Team"/>
        </authorList>
    </citation>
    <scope>NUCLEOTIDE SEQUENCE [LARGE SCALE MRNA]</scope>
    <source>
        <tissue>Colon</tissue>
        <tissue>Mammary gland</tissue>
    </source>
</reference>
<reference key="4">
    <citation type="journal article" date="2001" name="J. Biol. Chem.">
        <title>Pescadillo, a novel cell cycle regulatory protein abnormally expressed in malignant cells.</title>
        <authorList>
            <person name="Kinoshita Y."/>
            <person name="Jarell A.D."/>
            <person name="Flaman J.-M."/>
            <person name="Foltz G."/>
            <person name="Schuster J."/>
            <person name="Sopher B.L."/>
            <person name="Irvin D.K."/>
            <person name="Kanning K."/>
            <person name="Kornblum H.I."/>
            <person name="Nelson P.S."/>
            <person name="Hieter P."/>
            <person name="Morrison R.S."/>
        </authorList>
    </citation>
    <scope>INDUCTION</scope>
    <scope>DEVELOPMENTAL STAGE</scope>
</reference>
<reference key="5">
    <citation type="journal article" date="2002" name="J. Biol. Chem.">
        <title>Pescadillo is essential for nucleolar assembly, ribosome biogenesis, and mammalian cell proliferation.</title>
        <authorList>
            <person name="Lerch-Gaggl A.F."/>
            <person name="Haque J."/>
            <person name="Li J."/>
            <person name="Ning G."/>
            <person name="Traktman P."/>
            <person name="Duncan S.A."/>
        </authorList>
    </citation>
    <scope>SUBCELLULAR LOCATION</scope>
    <scope>TISSUE SPECIFICITY</scope>
    <scope>DEVELOPMENTAL STAGE</scope>
    <scope>INDUCTION</scope>
    <scope>DISRUPTION PHENOTYPE</scope>
</reference>
<reference key="6">
    <citation type="journal article" date="2004" name="Mol. Cell">
        <title>Physical and functional interaction between Pes1 and Bop1 in mammalian ribosome biogenesis.</title>
        <authorList>
            <person name="Lapik Y.R."/>
            <person name="Fernandes C.J."/>
            <person name="Lau L.F."/>
            <person name="Pestov D.G."/>
        </authorList>
    </citation>
    <scope>FUNCTION</scope>
    <scope>INTERACTION WITH BOP1</scope>
    <scope>SUBCELLULAR LOCATION</scope>
</reference>
<reference key="7">
    <citation type="journal article" date="2004" name="Mol. Cell. Biol.">
        <title>Role of pescadillo and upstream binding factor in the proliferation and differentiation of murine myeloid cells.</title>
        <authorList>
            <person name="Prisco M."/>
            <person name="Maiorana A."/>
            <person name="Guerzoni C."/>
            <person name="Calin G."/>
            <person name="Calabretta B."/>
            <person name="Voit R."/>
            <person name="Grummt I."/>
            <person name="Baserga R."/>
        </authorList>
    </citation>
    <scope>INTERACTION WITH IRS1 AND UBTF</scope>
    <scope>SUBCELLULAR LOCATION</scope>
</reference>
<reference key="8">
    <citation type="journal article" date="2007" name="J. Biol. Chem.">
        <title>Light chain 1 of microtubule-associated protein 1B can negatively regulate the action of Pes1.</title>
        <authorList>
            <person name="Lerch-Gaggl A.F."/>
            <person name="Sun K."/>
            <person name="Duncan S.A."/>
        </authorList>
    </citation>
    <scope>FUNCTION</scope>
    <scope>INTERACTION WITH MAP1B</scope>
    <scope>SUBCELLULAR LOCATION</scope>
</reference>
<reference key="9">
    <citation type="journal article" date="2010" name="Cell">
        <title>A tissue-specific atlas of mouse protein phosphorylation and expression.</title>
        <authorList>
            <person name="Huttlin E.L."/>
            <person name="Jedrychowski M.P."/>
            <person name="Elias J.E."/>
            <person name="Goswami T."/>
            <person name="Rad R."/>
            <person name="Beausoleil S.A."/>
            <person name="Villen J."/>
            <person name="Haas W."/>
            <person name="Sowa M.E."/>
            <person name="Gygi S.P."/>
        </authorList>
    </citation>
    <scope>IDENTIFICATION BY MASS SPECTROMETRY [LARGE SCALE ANALYSIS]</scope>
    <source>
        <tissue>Spleen</tissue>
    </source>
</reference>
<organism>
    <name type="scientific">Mus musculus</name>
    <name type="common">Mouse</name>
    <dbReference type="NCBI Taxonomy" id="10090"/>
    <lineage>
        <taxon>Eukaryota</taxon>
        <taxon>Metazoa</taxon>
        <taxon>Chordata</taxon>
        <taxon>Craniata</taxon>
        <taxon>Vertebrata</taxon>
        <taxon>Euteleostomi</taxon>
        <taxon>Mammalia</taxon>
        <taxon>Eutheria</taxon>
        <taxon>Euarchontoglires</taxon>
        <taxon>Glires</taxon>
        <taxon>Rodentia</taxon>
        <taxon>Myomorpha</taxon>
        <taxon>Muroidea</taxon>
        <taxon>Muridae</taxon>
        <taxon>Murinae</taxon>
        <taxon>Mus</taxon>
        <taxon>Mus</taxon>
    </lineage>
</organism>
<accession>Q9EQ61</accession>
<accession>Q542F0</accession>